<keyword id="KW-0903">Direct protein sequencing</keyword>
<keyword id="KW-1015">Disulfide bond</keyword>
<keyword id="KW-0872">Ion channel impairing toxin</keyword>
<keyword id="KW-0528">Neurotoxin</keyword>
<keyword id="KW-0632">Potassium channel impairing toxin</keyword>
<keyword id="KW-0964">Secreted</keyword>
<keyword id="KW-0800">Toxin</keyword>
<keyword id="KW-1220">Voltage-gated potassium channel impairing toxin</keyword>
<evidence type="ECO:0000250" key="1"/>
<evidence type="ECO:0000250" key="2">
    <source>
        <dbReference type="UniProtKB" id="P40755"/>
    </source>
</evidence>
<evidence type="ECO:0000269" key="3">
    <source>
    </source>
</evidence>
<evidence type="ECO:0000303" key="4">
    <source>
    </source>
</evidence>
<evidence type="ECO:0000305" key="5"/>
<evidence type="ECO:0000305" key="6">
    <source>
    </source>
</evidence>
<proteinExistence type="evidence at protein level"/>
<accession>P0C163</accession>
<sequence length="38" mass="4255">IFINVKCSLPQQCLRPCKDRFGQHAGGKCINGKCKCYP</sequence>
<comment type="function">
    <text evidence="3">Weakly blocks Kv1.3/KCNA3 voltage-gated potassium channels (Kd is estimated to be 366 nM).</text>
</comment>
<comment type="subcellular location">
    <subcellularLocation>
        <location evidence="3">Secreted</location>
    </subcellularLocation>
</comment>
<comment type="tissue specificity">
    <text evidence="6">Expressed by the venom gland.</text>
</comment>
<comment type="domain">
    <text evidence="2">Has the structural arrangement of an alpha-helix connected to a beta-sheet by disulfide bonds (CSalpha/beta).</text>
</comment>
<comment type="mass spectrometry" mass="4249.0" method="Electrospray" evidence="3"/>
<comment type="similarity">
    <text evidence="5">Belongs to the short scorpion toxin superfamily. Potassium channel inhibitor family. Alpha-KTx 02 subfamily.</text>
</comment>
<dbReference type="SMR" id="P0C163"/>
<dbReference type="GO" id="GO:0005576">
    <property type="term" value="C:extracellular region"/>
    <property type="evidence" value="ECO:0007669"/>
    <property type="project" value="UniProtKB-SubCell"/>
</dbReference>
<dbReference type="GO" id="GO:0008200">
    <property type="term" value="F:ion channel inhibitor activity"/>
    <property type="evidence" value="ECO:0007669"/>
    <property type="project" value="InterPro"/>
</dbReference>
<dbReference type="GO" id="GO:0015459">
    <property type="term" value="F:potassium channel regulator activity"/>
    <property type="evidence" value="ECO:0007669"/>
    <property type="project" value="UniProtKB-KW"/>
</dbReference>
<dbReference type="GO" id="GO:0090729">
    <property type="term" value="F:toxin activity"/>
    <property type="evidence" value="ECO:0007669"/>
    <property type="project" value="UniProtKB-KW"/>
</dbReference>
<dbReference type="FunFam" id="3.30.30.10:FF:000009">
    <property type="entry name" value="Potassium channel toxin alpha-KTx 4.3"/>
    <property type="match status" value="1"/>
</dbReference>
<dbReference type="Gene3D" id="3.30.30.10">
    <property type="entry name" value="Knottin, scorpion toxin-like"/>
    <property type="match status" value="1"/>
</dbReference>
<dbReference type="InterPro" id="IPR036574">
    <property type="entry name" value="Scorpion_toxin-like_sf"/>
</dbReference>
<dbReference type="InterPro" id="IPR001947">
    <property type="entry name" value="Scorpion_toxinS_K_inh"/>
</dbReference>
<dbReference type="Pfam" id="PF00451">
    <property type="entry name" value="Toxin_2"/>
    <property type="match status" value="1"/>
</dbReference>
<dbReference type="PRINTS" id="PR00286">
    <property type="entry name" value="CHARYBDTOXIN"/>
</dbReference>
<dbReference type="SUPFAM" id="SSF57095">
    <property type="entry name" value="Scorpion toxin-like"/>
    <property type="match status" value="1"/>
</dbReference>
<dbReference type="PROSITE" id="PS01138">
    <property type="entry name" value="SCORP_SHORT_TOXIN"/>
    <property type="match status" value="1"/>
</dbReference>
<name>KAX2A_CENEL</name>
<organism>
    <name type="scientific">Centruroides elegans</name>
    <name type="common">Bark scorpion</name>
    <dbReference type="NCBI Taxonomy" id="217897"/>
    <lineage>
        <taxon>Eukaryota</taxon>
        <taxon>Metazoa</taxon>
        <taxon>Ecdysozoa</taxon>
        <taxon>Arthropoda</taxon>
        <taxon>Chelicerata</taxon>
        <taxon>Arachnida</taxon>
        <taxon>Scorpiones</taxon>
        <taxon>Buthida</taxon>
        <taxon>Buthoidea</taxon>
        <taxon>Buthidae</taxon>
        <taxon>Centruroides</taxon>
    </lineage>
</organism>
<feature type="chain" id="PRO_0000226960" description="Potassium channel toxin alpha-KTx 2.10" evidence="3">
    <location>
        <begin position="1"/>
        <end position="38"/>
    </location>
</feature>
<feature type="site" description="Basic residue of the functional dyad" evidence="1">
    <location>
        <position position="28"/>
    </location>
</feature>
<feature type="site" description="Aromatic residue of the functional dyad" evidence="1">
    <location>
        <position position="37"/>
    </location>
</feature>
<feature type="disulfide bond" evidence="2">
    <location>
        <begin position="7"/>
        <end position="29"/>
    </location>
</feature>
<feature type="disulfide bond" evidence="2">
    <location>
        <begin position="13"/>
        <end position="34"/>
    </location>
</feature>
<feature type="disulfide bond" evidence="2">
    <location>
        <begin position="17"/>
        <end position="36"/>
    </location>
</feature>
<protein>
    <recommendedName>
        <fullName>Potassium channel toxin alpha-KTx 2.10</fullName>
    </recommendedName>
    <alternativeName>
        <fullName evidence="4">Toxin Ce3</fullName>
    </alternativeName>
</protein>
<reference key="1">
    <citation type="journal article" date="2005" name="Toxicon">
        <title>Novel alpha-KTx peptides from the venom of the scorpion Centruroides elegans selectively blockade Kv1.3 over IKCa1 K+ channels of T cells.</title>
        <authorList>
            <person name="Olamendi-Portugal T."/>
            <person name="Somodi S."/>
            <person name="Fernandez J.A."/>
            <person name="Zamudio F.Z."/>
            <person name="Becerril B."/>
            <person name="Varga Z."/>
            <person name="Panyi G."/>
            <person name="Gaspar R."/>
            <person name="Possani L.D."/>
        </authorList>
    </citation>
    <scope>PROTEIN SEQUENCE</scope>
    <scope>FUNCTION</scope>
    <scope>MASS SPECTROMETRY</scope>
    <scope>ACTIVITY PROFILE</scope>
    <scope>SUBCELLULAR LOCATION</scope>
    <source>
        <tissue>Venom</tissue>
    </source>
</reference>